<evidence type="ECO:0000250" key="1">
    <source>
        <dbReference type="UniProtKB" id="Q91V04"/>
    </source>
</evidence>
<evidence type="ECO:0000255" key="2"/>
<evidence type="ECO:0000255" key="3">
    <source>
        <dbReference type="PROSITE-ProRule" id="PRU00205"/>
    </source>
</evidence>
<evidence type="ECO:0000256" key="4">
    <source>
        <dbReference type="SAM" id="MobiDB-lite"/>
    </source>
</evidence>
<evidence type="ECO:0000269" key="5">
    <source>
    </source>
</evidence>
<evidence type="ECO:0000269" key="6">
    <source>
    </source>
</evidence>
<evidence type="ECO:0000269" key="7">
    <source>
    </source>
</evidence>
<evidence type="ECO:0000269" key="8">
    <source>
    </source>
</evidence>
<evidence type="ECO:0000269" key="9">
    <source>
    </source>
</evidence>
<evidence type="ECO:0000269" key="10">
    <source>
    </source>
</evidence>
<evidence type="ECO:0000269" key="11">
    <source>
    </source>
</evidence>
<evidence type="ECO:0000303" key="12">
    <source>
    </source>
</evidence>
<evidence type="ECO:0000303" key="13">
    <source>
    </source>
</evidence>
<evidence type="ECO:0000303" key="14">
    <source>
    </source>
</evidence>
<evidence type="ECO:0000303" key="15">
    <source>
    </source>
</evidence>
<evidence type="ECO:0000305" key="16"/>
<evidence type="ECO:0000312" key="17">
    <source>
        <dbReference type="HGNC" id="HGNC:20568"/>
    </source>
</evidence>
<evidence type="ECO:0007744" key="18">
    <source>
    </source>
</evidence>
<evidence type="ECO:0007744" key="19">
    <source>
    </source>
</evidence>
<evidence type="ECO:0007744" key="20">
    <source>
    </source>
</evidence>
<evidence type="ECO:0007744" key="21">
    <source>
    </source>
</evidence>
<evidence type="ECO:0007744" key="22">
    <source>
    </source>
</evidence>
<evidence type="ECO:0007744" key="23">
    <source>
    </source>
</evidence>
<reference key="1">
    <citation type="journal article" date="1992" name="Nature">
        <title>A protein of the endoplasmic reticulum involved early in polypeptide translocation.</title>
        <authorList>
            <person name="Goerlich D."/>
            <person name="Hartmann E."/>
            <person name="Prehn S."/>
            <person name="Rapoport T.A."/>
        </authorList>
    </citation>
    <scope>NUCLEOTIDE SEQUENCE [MRNA] (ISOFORM 1)</scope>
    <scope>FUNCTION</scope>
    <scope>SUBCELLULAR LOCATION</scope>
    <scope>GLYCOSYLATION</scope>
</reference>
<reference key="2">
    <citation type="journal article" date="2004" name="Nat. Genet.">
        <title>Complete sequencing and characterization of 21,243 full-length human cDNAs.</title>
        <authorList>
            <person name="Ota T."/>
            <person name="Suzuki Y."/>
            <person name="Nishikawa T."/>
            <person name="Otsuki T."/>
            <person name="Sugiyama T."/>
            <person name="Irie R."/>
            <person name="Wakamatsu A."/>
            <person name="Hayashi K."/>
            <person name="Sato H."/>
            <person name="Nagai K."/>
            <person name="Kimura K."/>
            <person name="Makita H."/>
            <person name="Sekine M."/>
            <person name="Obayashi M."/>
            <person name="Nishi T."/>
            <person name="Shibahara T."/>
            <person name="Tanaka T."/>
            <person name="Ishii S."/>
            <person name="Yamamoto J."/>
            <person name="Saito K."/>
            <person name="Kawai Y."/>
            <person name="Isono Y."/>
            <person name="Nakamura Y."/>
            <person name="Nagahari K."/>
            <person name="Murakami K."/>
            <person name="Yasuda T."/>
            <person name="Iwayanagi T."/>
            <person name="Wagatsuma M."/>
            <person name="Shiratori A."/>
            <person name="Sudo H."/>
            <person name="Hosoiri T."/>
            <person name="Kaku Y."/>
            <person name="Kodaira H."/>
            <person name="Kondo H."/>
            <person name="Sugawara M."/>
            <person name="Takahashi M."/>
            <person name="Kanda K."/>
            <person name="Yokoi T."/>
            <person name="Furuya T."/>
            <person name="Kikkawa E."/>
            <person name="Omura Y."/>
            <person name="Abe K."/>
            <person name="Kamihara K."/>
            <person name="Katsuta N."/>
            <person name="Sato K."/>
            <person name="Tanikawa M."/>
            <person name="Yamazaki M."/>
            <person name="Ninomiya K."/>
            <person name="Ishibashi T."/>
            <person name="Yamashita H."/>
            <person name="Murakawa K."/>
            <person name="Fujimori K."/>
            <person name="Tanai H."/>
            <person name="Kimata M."/>
            <person name="Watanabe M."/>
            <person name="Hiraoka S."/>
            <person name="Chiba Y."/>
            <person name="Ishida S."/>
            <person name="Ono Y."/>
            <person name="Takiguchi S."/>
            <person name="Watanabe S."/>
            <person name="Yosida M."/>
            <person name="Hotuta T."/>
            <person name="Kusano J."/>
            <person name="Kanehori K."/>
            <person name="Takahashi-Fujii A."/>
            <person name="Hara H."/>
            <person name="Tanase T.-O."/>
            <person name="Nomura Y."/>
            <person name="Togiya S."/>
            <person name="Komai F."/>
            <person name="Hara R."/>
            <person name="Takeuchi K."/>
            <person name="Arita M."/>
            <person name="Imose N."/>
            <person name="Musashino K."/>
            <person name="Yuuki H."/>
            <person name="Oshima A."/>
            <person name="Sasaki N."/>
            <person name="Aotsuka S."/>
            <person name="Yoshikawa Y."/>
            <person name="Matsunawa H."/>
            <person name="Ichihara T."/>
            <person name="Shiohata N."/>
            <person name="Sano S."/>
            <person name="Moriya S."/>
            <person name="Momiyama H."/>
            <person name="Satoh N."/>
            <person name="Takami S."/>
            <person name="Terashima Y."/>
            <person name="Suzuki O."/>
            <person name="Nakagawa S."/>
            <person name="Senoh A."/>
            <person name="Mizoguchi H."/>
            <person name="Goto Y."/>
            <person name="Shimizu F."/>
            <person name="Wakebe H."/>
            <person name="Hishigaki H."/>
            <person name="Watanabe T."/>
            <person name="Sugiyama A."/>
            <person name="Takemoto M."/>
            <person name="Kawakami B."/>
            <person name="Yamazaki M."/>
            <person name="Watanabe K."/>
            <person name="Kumagai A."/>
            <person name="Itakura S."/>
            <person name="Fukuzumi Y."/>
            <person name="Fujimori Y."/>
            <person name="Komiyama M."/>
            <person name="Tashiro H."/>
            <person name="Tanigami A."/>
            <person name="Fujiwara T."/>
            <person name="Ono T."/>
            <person name="Yamada K."/>
            <person name="Fujii Y."/>
            <person name="Ozaki K."/>
            <person name="Hirao M."/>
            <person name="Ohmori Y."/>
            <person name="Kawabata A."/>
            <person name="Hikiji T."/>
            <person name="Kobatake N."/>
            <person name="Inagaki H."/>
            <person name="Ikema Y."/>
            <person name="Okamoto S."/>
            <person name="Okitani R."/>
            <person name="Kawakami T."/>
            <person name="Noguchi S."/>
            <person name="Itoh T."/>
            <person name="Shigeta K."/>
            <person name="Senba T."/>
            <person name="Matsumura K."/>
            <person name="Nakajima Y."/>
            <person name="Mizuno T."/>
            <person name="Morinaga M."/>
            <person name="Sasaki M."/>
            <person name="Togashi T."/>
            <person name="Oyama M."/>
            <person name="Hata H."/>
            <person name="Watanabe M."/>
            <person name="Komatsu T."/>
            <person name="Mizushima-Sugano J."/>
            <person name="Satoh T."/>
            <person name="Shirai Y."/>
            <person name="Takahashi Y."/>
            <person name="Nakagawa K."/>
            <person name="Okumura K."/>
            <person name="Nagase T."/>
            <person name="Nomura N."/>
            <person name="Kikuchi H."/>
            <person name="Masuho Y."/>
            <person name="Yamashita R."/>
            <person name="Nakai K."/>
            <person name="Yada T."/>
            <person name="Nakamura Y."/>
            <person name="Ohara O."/>
            <person name="Isogai T."/>
            <person name="Sugano S."/>
        </authorList>
    </citation>
    <scope>NUCLEOTIDE SEQUENCE [LARGE SCALE MRNA] (ISOFORM 2)</scope>
    <source>
        <tissue>Thymus</tissue>
    </source>
</reference>
<reference key="3">
    <citation type="journal article" date="2006" name="Nature">
        <title>DNA sequence and analysis of human chromosome 8.</title>
        <authorList>
            <person name="Nusbaum C."/>
            <person name="Mikkelsen T.S."/>
            <person name="Zody M.C."/>
            <person name="Asakawa S."/>
            <person name="Taudien S."/>
            <person name="Garber M."/>
            <person name="Kodira C.D."/>
            <person name="Schueler M.G."/>
            <person name="Shimizu A."/>
            <person name="Whittaker C.A."/>
            <person name="Chang J.L."/>
            <person name="Cuomo C.A."/>
            <person name="Dewar K."/>
            <person name="FitzGerald M.G."/>
            <person name="Yang X."/>
            <person name="Allen N.R."/>
            <person name="Anderson S."/>
            <person name="Asakawa T."/>
            <person name="Blechschmidt K."/>
            <person name="Bloom T."/>
            <person name="Borowsky M.L."/>
            <person name="Butler J."/>
            <person name="Cook A."/>
            <person name="Corum B."/>
            <person name="DeArellano K."/>
            <person name="DeCaprio D."/>
            <person name="Dooley K.T."/>
            <person name="Dorris L. III"/>
            <person name="Engels R."/>
            <person name="Gloeckner G."/>
            <person name="Hafez N."/>
            <person name="Hagopian D.S."/>
            <person name="Hall J.L."/>
            <person name="Ishikawa S.K."/>
            <person name="Jaffe D.B."/>
            <person name="Kamat A."/>
            <person name="Kudoh J."/>
            <person name="Lehmann R."/>
            <person name="Lokitsang T."/>
            <person name="Macdonald P."/>
            <person name="Major J.E."/>
            <person name="Matthews C.D."/>
            <person name="Mauceli E."/>
            <person name="Menzel U."/>
            <person name="Mihalev A.H."/>
            <person name="Minoshima S."/>
            <person name="Murayama Y."/>
            <person name="Naylor J.W."/>
            <person name="Nicol R."/>
            <person name="Nguyen C."/>
            <person name="O'Leary S.B."/>
            <person name="O'Neill K."/>
            <person name="Parker S.C.J."/>
            <person name="Polley A."/>
            <person name="Raymond C.K."/>
            <person name="Reichwald K."/>
            <person name="Rodriguez J."/>
            <person name="Sasaki T."/>
            <person name="Schilhabel M."/>
            <person name="Siddiqui R."/>
            <person name="Smith C.L."/>
            <person name="Sneddon T.P."/>
            <person name="Talamas J.A."/>
            <person name="Tenzin P."/>
            <person name="Topham K."/>
            <person name="Venkataraman V."/>
            <person name="Wen G."/>
            <person name="Yamazaki S."/>
            <person name="Young S.K."/>
            <person name="Zeng Q."/>
            <person name="Zimmer A.R."/>
            <person name="Rosenthal A."/>
            <person name="Birren B.W."/>
            <person name="Platzer M."/>
            <person name="Shimizu N."/>
            <person name="Lander E.S."/>
        </authorList>
    </citation>
    <scope>NUCLEOTIDE SEQUENCE [LARGE SCALE GENOMIC DNA]</scope>
</reference>
<reference key="4">
    <citation type="journal article" date="2004" name="Genome Res.">
        <title>The status, quality, and expansion of the NIH full-length cDNA project: the Mammalian Gene Collection (MGC).</title>
        <authorList>
            <consortium name="The MGC Project Team"/>
        </authorList>
    </citation>
    <scope>NUCLEOTIDE SEQUENCE [LARGE SCALE MRNA] (ISOFORM 1)</scope>
    <source>
        <tissue>Brain</tissue>
        <tissue>Kidney</tissue>
    </source>
</reference>
<reference key="5">
    <citation type="journal article" date="1996" name="Cell">
        <title>The cotranslational integration of membrane proteins into the phospholipid bilayer is a multistep process.</title>
        <authorList>
            <person name="Do H."/>
            <person name="Falcone D."/>
            <person name="Lin J."/>
            <person name="Andrews D.W."/>
            <person name="Johnson A.E."/>
        </authorList>
    </citation>
    <scope>FUNCTION</scope>
    <scope>SUBCELLULAR LOCATION</scope>
</reference>
<reference key="6">
    <citation type="journal article" date="1998" name="Cell">
        <title>TRAM regulates the exposure of nascent secretory proteins to the cytosol during translocation into the endoplasmic reticulum.</title>
        <authorList>
            <person name="Hegde R.S."/>
            <person name="Voigt S."/>
            <person name="Rapoport T.A."/>
            <person name="Lingappa V.R."/>
        </authorList>
    </citation>
    <scope>FUNCTION</scope>
    <scope>SUBCELLULAR LOCATION</scope>
</reference>
<reference key="7">
    <citation type="journal article" date="2002" name="Mol. Biol. Cell">
        <title>Different transmembrane domains associate with distinct endoplasmic reticulum components during membrane integration of a polytopic protein.</title>
        <authorList>
            <person name="Meacock S.L."/>
            <person name="Lecomte F.J."/>
            <person name="Crawshaw S.G."/>
            <person name="High S."/>
        </authorList>
    </citation>
    <scope>FUNCTION</scope>
    <scope>SUBCELLULAR LOCATION</scope>
</reference>
<reference key="8">
    <citation type="journal article" date="2006" name="Cell">
        <title>Global, in vivo, and site-specific phosphorylation dynamics in signaling networks.</title>
        <authorList>
            <person name="Olsen J.V."/>
            <person name="Blagoev B."/>
            <person name="Gnad F."/>
            <person name="Macek B."/>
            <person name="Kumar C."/>
            <person name="Mortensen P."/>
            <person name="Mann M."/>
        </authorList>
    </citation>
    <scope>PHOSPHORYLATION [LARGE SCALE ANALYSIS] AT SER-365</scope>
    <scope>IDENTIFICATION BY MASS SPECTROMETRY [LARGE SCALE ANALYSIS]</scope>
    <source>
        <tissue>Cervix carcinoma</tissue>
    </source>
</reference>
<reference key="9">
    <citation type="journal article" date="2008" name="Mol. Cell">
        <title>Kinase-selective enrichment enables quantitative phosphoproteomics of the kinome across the cell cycle.</title>
        <authorList>
            <person name="Daub H."/>
            <person name="Olsen J.V."/>
            <person name="Bairlein M."/>
            <person name="Gnad F."/>
            <person name="Oppermann F.S."/>
            <person name="Korner R."/>
            <person name="Greff Z."/>
            <person name="Keri G."/>
            <person name="Stemmann O."/>
            <person name="Mann M."/>
        </authorList>
    </citation>
    <scope>PHOSPHORYLATION [LARGE SCALE ANALYSIS] AT SER-365</scope>
    <scope>IDENTIFICATION BY MASS SPECTROMETRY [LARGE SCALE ANALYSIS]</scope>
    <source>
        <tissue>Cervix carcinoma</tissue>
    </source>
</reference>
<reference key="10">
    <citation type="journal article" date="2008" name="Proc. Natl. Acad. Sci. U.S.A.">
        <title>A quantitative atlas of mitotic phosphorylation.</title>
        <authorList>
            <person name="Dephoure N."/>
            <person name="Zhou C."/>
            <person name="Villen J."/>
            <person name="Beausoleil S.A."/>
            <person name="Bakalarski C.E."/>
            <person name="Elledge S.J."/>
            <person name="Gygi S.P."/>
        </authorList>
    </citation>
    <scope>PHOSPHORYLATION [LARGE SCALE ANALYSIS] AT SER-365</scope>
    <scope>IDENTIFICATION BY MASS SPECTROMETRY [LARGE SCALE ANALYSIS]</scope>
    <source>
        <tissue>Cervix carcinoma</tissue>
    </source>
</reference>
<reference key="11">
    <citation type="journal article" date="2009" name="J. Biol. Chem.">
        <title>TRAM1 participates in human cytomegalovirus US2- and US11-mediated dislocation of an endoplasmic reticulum membrane glycoprotein.</title>
        <authorList>
            <person name="Oresic K."/>
            <person name="Ng C.L."/>
            <person name="Tortorella D."/>
        </authorList>
    </citation>
    <scope>FUNCTION (MICROBIAL INFECTION)</scope>
    <scope>INTERACTION WITH SEC61B AND DERL1</scope>
    <scope>INTERACTION WITH HHV-5 PROTEINS US2 AND US11 (MICROBIAL INFECTION)</scope>
    <scope>GLYCOSYLATION</scope>
</reference>
<reference key="12">
    <citation type="journal article" date="2009" name="Sci. Signal.">
        <title>Quantitative phosphoproteomic analysis of T cell receptor signaling reveals system-wide modulation of protein-protein interactions.</title>
        <authorList>
            <person name="Mayya V."/>
            <person name="Lundgren D.H."/>
            <person name="Hwang S.-I."/>
            <person name="Rezaul K."/>
            <person name="Wu L."/>
            <person name="Eng J.K."/>
            <person name="Rodionov V."/>
            <person name="Han D.K."/>
        </authorList>
    </citation>
    <scope>PHOSPHORYLATION [LARGE SCALE ANALYSIS] AT SER-365</scope>
    <scope>IDENTIFICATION BY MASS SPECTROMETRY [LARGE SCALE ANALYSIS]</scope>
    <source>
        <tissue>Leukemic T-cell</tissue>
    </source>
</reference>
<reference key="13">
    <citation type="journal article" date="2010" name="Exp. Cell Res.">
        <title>TRAM1 is involved in disposal of ER membrane degradation substrates.</title>
        <authorList>
            <person name="Ng C.L."/>
            <person name="Oresic K."/>
            <person name="Tortorella D."/>
        </authorList>
    </citation>
    <scope>FUNCTION</scope>
    <scope>SUBCELLULAR LOCATION</scope>
    <scope>INDUCTION BY ER STRESS</scope>
</reference>
<reference key="14">
    <citation type="journal article" date="2010" name="Sci. Signal.">
        <title>Quantitative phosphoproteomics reveals widespread full phosphorylation site occupancy during mitosis.</title>
        <authorList>
            <person name="Olsen J.V."/>
            <person name="Vermeulen M."/>
            <person name="Santamaria A."/>
            <person name="Kumar C."/>
            <person name="Miller M.L."/>
            <person name="Jensen L.J."/>
            <person name="Gnad F."/>
            <person name="Cox J."/>
            <person name="Jensen T.S."/>
            <person name="Nigg E.A."/>
            <person name="Brunak S."/>
            <person name="Mann M."/>
        </authorList>
    </citation>
    <scope>PHOSPHORYLATION [LARGE SCALE ANALYSIS] AT SER-365</scope>
    <scope>IDENTIFICATION BY MASS SPECTROMETRY [LARGE SCALE ANALYSIS]</scope>
    <source>
        <tissue>Cervix carcinoma</tissue>
    </source>
</reference>
<reference key="15">
    <citation type="journal article" date="2011" name="BMC Syst. Biol.">
        <title>Initial characterization of the human central proteome.</title>
        <authorList>
            <person name="Burkard T.R."/>
            <person name="Planyavsky M."/>
            <person name="Kaupe I."/>
            <person name="Breitwieser F.P."/>
            <person name="Buerckstuemmer T."/>
            <person name="Bennett K.L."/>
            <person name="Superti-Furga G."/>
            <person name="Colinge J."/>
        </authorList>
    </citation>
    <scope>IDENTIFICATION BY MASS SPECTROMETRY [LARGE SCALE ANALYSIS]</scope>
</reference>
<reference key="16">
    <citation type="journal article" date="2013" name="J. Proteome Res.">
        <title>Toward a comprehensive characterization of a human cancer cell phosphoproteome.</title>
        <authorList>
            <person name="Zhou H."/>
            <person name="Di Palma S."/>
            <person name="Preisinger C."/>
            <person name="Peng M."/>
            <person name="Polat A.N."/>
            <person name="Heck A.J."/>
            <person name="Mohammed S."/>
        </authorList>
    </citation>
    <scope>PHOSPHORYLATION [LARGE SCALE ANALYSIS] AT SER-365</scope>
    <scope>IDENTIFICATION BY MASS SPECTROMETRY [LARGE SCALE ANALYSIS]</scope>
    <source>
        <tissue>Cervix carcinoma</tissue>
        <tissue>Erythroleukemia</tissue>
    </source>
</reference>
<reference key="17">
    <citation type="journal article" date="2020" name="Channels">
        <title>TRAM1 protein may support ER protein import by modulating the phospholipid bilayer near the lateral gate of the Sec61-channel.</title>
        <authorList>
            <person name="Klein M.C."/>
            <person name="Lerner M."/>
            <person name="Nguyen D."/>
            <person name="Pfeffer S."/>
            <person name="Dudek J."/>
            <person name="Foerster F."/>
            <person name="Helms V."/>
            <person name="Lang S."/>
            <person name="Zimmermann R."/>
        </authorList>
    </citation>
    <scope>FUNCTION</scope>
</reference>
<proteinExistence type="evidence at protein level"/>
<organism>
    <name type="scientific">Homo sapiens</name>
    <name type="common">Human</name>
    <dbReference type="NCBI Taxonomy" id="9606"/>
    <lineage>
        <taxon>Eukaryota</taxon>
        <taxon>Metazoa</taxon>
        <taxon>Chordata</taxon>
        <taxon>Craniata</taxon>
        <taxon>Vertebrata</taxon>
        <taxon>Euteleostomi</taxon>
        <taxon>Mammalia</taxon>
        <taxon>Eutheria</taxon>
        <taxon>Euarchontoglires</taxon>
        <taxon>Primates</taxon>
        <taxon>Haplorrhini</taxon>
        <taxon>Catarrhini</taxon>
        <taxon>Hominidae</taxon>
        <taxon>Homo</taxon>
    </lineage>
</organism>
<protein>
    <recommendedName>
        <fullName evidence="13">Translocating chain-associated membrane protein 1</fullName>
        <shortName evidence="13">Protein TRAM1</shortName>
    </recommendedName>
</protein>
<dbReference type="EMBL" id="X63679">
    <property type="protein sequence ID" value="CAA45218.1"/>
    <property type="molecule type" value="mRNA"/>
</dbReference>
<dbReference type="EMBL" id="AK303411">
    <property type="protein sequence ID" value="BAG64464.1"/>
    <property type="molecule type" value="mRNA"/>
</dbReference>
<dbReference type="EMBL" id="AC022731">
    <property type="status" value="NOT_ANNOTATED_CDS"/>
    <property type="molecule type" value="Genomic_DNA"/>
</dbReference>
<dbReference type="EMBL" id="AC120194">
    <property type="status" value="NOT_ANNOTATED_CDS"/>
    <property type="molecule type" value="Genomic_DNA"/>
</dbReference>
<dbReference type="EMBL" id="BC000687">
    <property type="protein sequence ID" value="AAH00687.1"/>
    <property type="molecule type" value="mRNA"/>
</dbReference>
<dbReference type="EMBL" id="BC037738">
    <property type="protein sequence ID" value="AAH37738.1"/>
    <property type="molecule type" value="mRNA"/>
</dbReference>
<dbReference type="CCDS" id="CCDS6207.1">
    <molecule id="Q15629-1"/>
</dbReference>
<dbReference type="PIR" id="S30034">
    <property type="entry name" value="S30034"/>
</dbReference>
<dbReference type="RefSeq" id="NP_001304733.1">
    <molecule id="Q15629-2"/>
    <property type="nucleotide sequence ID" value="NM_001317804.2"/>
</dbReference>
<dbReference type="RefSeq" id="NP_001304734.1">
    <property type="nucleotide sequence ID" value="NM_001317805.1"/>
</dbReference>
<dbReference type="RefSeq" id="NP_055109.1">
    <molecule id="Q15629-1"/>
    <property type="nucleotide sequence ID" value="NM_014294.6"/>
</dbReference>
<dbReference type="SMR" id="Q15629"/>
<dbReference type="BioGRID" id="117032">
    <property type="interactions" value="80"/>
</dbReference>
<dbReference type="CORUM" id="Q15629"/>
<dbReference type="DIP" id="DIP-45978N"/>
<dbReference type="FunCoup" id="Q15629">
    <property type="interactions" value="1600"/>
</dbReference>
<dbReference type="IntAct" id="Q15629">
    <property type="interactions" value="36"/>
</dbReference>
<dbReference type="MINT" id="Q15629"/>
<dbReference type="STRING" id="9606.ENSP00000262213"/>
<dbReference type="TCDB" id="9.B.311.2.1">
    <property type="family name" value="the 6-7 tms tram-lag (tram-lag) family"/>
</dbReference>
<dbReference type="GlyConnect" id="1838">
    <property type="glycosylation" value="1 N-Linked glycan (1 site)"/>
</dbReference>
<dbReference type="GlyCosmos" id="Q15629">
    <property type="glycosylation" value="2 sites, 1 glycan"/>
</dbReference>
<dbReference type="GlyGen" id="Q15629">
    <property type="glycosylation" value="3 sites, 2 N-linked glycans (1 site), 1 O-linked glycan (1 site)"/>
</dbReference>
<dbReference type="iPTMnet" id="Q15629"/>
<dbReference type="PhosphoSitePlus" id="Q15629"/>
<dbReference type="SwissPalm" id="Q15629"/>
<dbReference type="BioMuta" id="TRAM1"/>
<dbReference type="DMDM" id="18202507"/>
<dbReference type="jPOST" id="Q15629"/>
<dbReference type="MassIVE" id="Q15629"/>
<dbReference type="PaxDb" id="9606-ENSP00000262213"/>
<dbReference type="PeptideAtlas" id="Q15629"/>
<dbReference type="ProteomicsDB" id="5680"/>
<dbReference type="ProteomicsDB" id="60664">
    <molecule id="Q15629-1"/>
</dbReference>
<dbReference type="Pumba" id="Q15629"/>
<dbReference type="TopDownProteomics" id="Q15629-1">
    <molecule id="Q15629-1"/>
</dbReference>
<dbReference type="Antibodypedia" id="12213">
    <property type="antibodies" value="143 antibodies from 28 providers"/>
</dbReference>
<dbReference type="DNASU" id="23471"/>
<dbReference type="Ensembl" id="ENST00000262213.7">
    <molecule id="Q15629-1"/>
    <property type="protein sequence ID" value="ENSP00000262213.2"/>
    <property type="gene ID" value="ENSG00000067167.8"/>
</dbReference>
<dbReference type="GeneID" id="23471"/>
<dbReference type="KEGG" id="hsa:23471"/>
<dbReference type="MANE-Select" id="ENST00000262213.7">
    <property type="protein sequence ID" value="ENSP00000262213.2"/>
    <property type="RefSeq nucleotide sequence ID" value="NM_014294.6"/>
    <property type="RefSeq protein sequence ID" value="NP_055109.1"/>
</dbReference>
<dbReference type="AGR" id="HGNC:20568"/>
<dbReference type="CTD" id="23471"/>
<dbReference type="DisGeNET" id="23471"/>
<dbReference type="GeneCards" id="TRAM1"/>
<dbReference type="HGNC" id="HGNC:20568">
    <property type="gene designation" value="TRAM1"/>
</dbReference>
<dbReference type="HPA" id="ENSG00000067167">
    <property type="expression patterns" value="Low tissue specificity"/>
</dbReference>
<dbReference type="MIM" id="605190">
    <property type="type" value="gene"/>
</dbReference>
<dbReference type="neXtProt" id="NX_Q15629"/>
<dbReference type="OpenTargets" id="ENSG00000067167"/>
<dbReference type="PharmGKB" id="PA134955644"/>
<dbReference type="VEuPathDB" id="HostDB:ENSG00000067167"/>
<dbReference type="eggNOG" id="KOG1608">
    <property type="taxonomic scope" value="Eukaryota"/>
</dbReference>
<dbReference type="GeneTree" id="ENSGT00510000046470"/>
<dbReference type="HOGENOM" id="CLU_062830_0_0_1"/>
<dbReference type="InParanoid" id="Q15629"/>
<dbReference type="OMA" id="CAVFFYF"/>
<dbReference type="OrthoDB" id="3053196at2759"/>
<dbReference type="PAN-GO" id="Q15629">
    <property type="GO annotations" value="2 GO annotations based on evolutionary models"/>
</dbReference>
<dbReference type="PhylomeDB" id="Q15629"/>
<dbReference type="TreeFam" id="TF314319"/>
<dbReference type="PathwayCommons" id="Q15629"/>
<dbReference type="Reactome" id="R-HSA-1799339">
    <property type="pathway name" value="SRP-dependent cotranslational protein targeting to membrane"/>
</dbReference>
<dbReference type="SignaLink" id="Q15629"/>
<dbReference type="BioGRID-ORCS" id="23471">
    <property type="hits" value="17 hits in 1155 CRISPR screens"/>
</dbReference>
<dbReference type="ChiTaRS" id="TRAM1">
    <property type="organism name" value="human"/>
</dbReference>
<dbReference type="GenomeRNAi" id="23471"/>
<dbReference type="Pharos" id="Q15629">
    <property type="development level" value="Tbio"/>
</dbReference>
<dbReference type="PRO" id="PR:Q15629"/>
<dbReference type="Proteomes" id="UP000005640">
    <property type="component" value="Chromosome 8"/>
</dbReference>
<dbReference type="RNAct" id="Q15629">
    <property type="molecule type" value="protein"/>
</dbReference>
<dbReference type="Bgee" id="ENSG00000067167">
    <property type="expression patterns" value="Expressed in choroid plexus epithelium and 216 other cell types or tissues"/>
</dbReference>
<dbReference type="ExpressionAtlas" id="Q15629">
    <property type="expression patterns" value="baseline and differential"/>
</dbReference>
<dbReference type="GO" id="GO:0005783">
    <property type="term" value="C:endoplasmic reticulum"/>
    <property type="evidence" value="ECO:0000314"/>
    <property type="project" value="ParkinsonsUK-UCL"/>
</dbReference>
<dbReference type="GO" id="GO:0005789">
    <property type="term" value="C:endoplasmic reticulum membrane"/>
    <property type="evidence" value="ECO:0000314"/>
    <property type="project" value="UniProtKB"/>
</dbReference>
<dbReference type="GO" id="GO:0016020">
    <property type="term" value="C:membrane"/>
    <property type="evidence" value="ECO:0000304"/>
    <property type="project" value="ProtInc"/>
</dbReference>
<dbReference type="GO" id="GO:0038023">
    <property type="term" value="F:signaling receptor activity"/>
    <property type="evidence" value="ECO:0000304"/>
    <property type="project" value="ProtInc"/>
</dbReference>
<dbReference type="GO" id="GO:0006613">
    <property type="term" value="P:cotranslational protein targeting to membrane"/>
    <property type="evidence" value="ECO:0000314"/>
    <property type="project" value="UniProtKB"/>
</dbReference>
<dbReference type="GO" id="GO:0045048">
    <property type="term" value="P:protein insertion into ER membrane"/>
    <property type="evidence" value="ECO:0000314"/>
    <property type="project" value="UniProtKB"/>
</dbReference>
<dbReference type="GO" id="GO:0006986">
    <property type="term" value="P:response to unfolded protein"/>
    <property type="evidence" value="ECO:0000315"/>
    <property type="project" value="UniProtKB"/>
</dbReference>
<dbReference type="GO" id="GO:0006616">
    <property type="term" value="P:SRP-dependent cotranslational protein targeting to membrane, translocation"/>
    <property type="evidence" value="ECO:0007669"/>
    <property type="project" value="InterPro"/>
</dbReference>
<dbReference type="InterPro" id="IPR006634">
    <property type="entry name" value="TLC-dom"/>
</dbReference>
<dbReference type="InterPro" id="IPR016447">
    <property type="entry name" value="Translocation_assoc_membrane"/>
</dbReference>
<dbReference type="PANTHER" id="PTHR12371:SF3">
    <property type="entry name" value="TRANSLOCATING CHAIN-ASSOCIATED MEMBRANE PROTEIN 1"/>
    <property type="match status" value="1"/>
</dbReference>
<dbReference type="PANTHER" id="PTHR12371">
    <property type="entry name" value="TRANSLOCATION ASSOCIATED MEMBRANE PROTEIN"/>
    <property type="match status" value="1"/>
</dbReference>
<dbReference type="Pfam" id="PF03798">
    <property type="entry name" value="TRAM_LAG1_CLN8"/>
    <property type="match status" value="1"/>
</dbReference>
<dbReference type="PIRSF" id="PIRSF005449">
    <property type="entry name" value="Translocation_assoc_membrane"/>
    <property type="match status" value="1"/>
</dbReference>
<dbReference type="SMART" id="SM00724">
    <property type="entry name" value="TLC"/>
    <property type="match status" value="1"/>
</dbReference>
<dbReference type="PROSITE" id="PS50922">
    <property type="entry name" value="TLC"/>
    <property type="match status" value="1"/>
</dbReference>
<feature type="chain" id="PRO_0000185530" description="Translocating chain-associated membrane protein 1">
    <location>
        <begin position="1"/>
        <end position="374"/>
    </location>
</feature>
<feature type="topological domain" description="Cytoplasmic" evidence="1">
    <location>
        <begin position="1"/>
        <end position="29"/>
    </location>
</feature>
<feature type="transmembrane region" description="Helical" evidence="2">
    <location>
        <begin position="30"/>
        <end position="50"/>
    </location>
</feature>
<feature type="topological domain" description="Lumenal" evidence="1">
    <location>
        <begin position="51"/>
        <end position="76"/>
    </location>
</feature>
<feature type="transmembrane region" description="Helical" evidence="2">
    <location>
        <begin position="77"/>
        <end position="97"/>
    </location>
</feature>
<feature type="topological domain" description="Cytoplasmic" evidence="1">
    <location>
        <begin position="98"/>
        <end position="121"/>
    </location>
</feature>
<feature type="transmembrane region" description="Helical" evidence="2">
    <location>
        <begin position="122"/>
        <end position="142"/>
    </location>
</feature>
<feature type="topological domain" description="Lumenal" evidence="1">
    <location>
        <begin position="143"/>
        <end position="159"/>
    </location>
</feature>
<feature type="transmembrane region" description="Helical" evidence="2">
    <location>
        <begin position="160"/>
        <end position="180"/>
    </location>
</feature>
<feature type="topological domain" description="Cytoplasmic" evidence="1">
    <location>
        <begin position="181"/>
        <end position="192"/>
    </location>
</feature>
<feature type="transmembrane region" description="Helical" evidence="2">
    <location>
        <begin position="193"/>
        <end position="213"/>
    </location>
</feature>
<feature type="topological domain" description="Lumenal" evidence="1">
    <location>
        <begin position="214"/>
        <end position="217"/>
    </location>
</feature>
<feature type="transmembrane region" description="Helical" evidence="2">
    <location>
        <begin position="218"/>
        <end position="238"/>
    </location>
</feature>
<feature type="topological domain" description="Cytoplasmic" evidence="1">
    <location>
        <begin position="239"/>
        <end position="251"/>
    </location>
</feature>
<feature type="transmembrane region" description="Helical" evidence="2">
    <location>
        <begin position="252"/>
        <end position="272"/>
    </location>
</feature>
<feature type="topological domain" description="Lumenal" evidence="1">
    <location>
        <begin position="273"/>
        <end position="297"/>
    </location>
</feature>
<feature type="transmembrane region" description="Helical" evidence="2">
    <location>
        <begin position="298"/>
        <end position="318"/>
    </location>
</feature>
<feature type="topological domain" description="Cytoplasmic" evidence="1">
    <location>
        <begin position="319"/>
        <end position="374"/>
    </location>
</feature>
<feature type="domain" description="TLC" evidence="3">
    <location>
        <begin position="117"/>
        <end position="326"/>
    </location>
</feature>
<feature type="region of interest" description="Disordered" evidence="4">
    <location>
        <begin position="334"/>
        <end position="374"/>
    </location>
</feature>
<feature type="compositionally biased region" description="Basic residues" evidence="4">
    <location>
        <begin position="334"/>
        <end position="347"/>
    </location>
</feature>
<feature type="compositionally biased region" description="Polar residues" evidence="4">
    <location>
        <begin position="352"/>
        <end position="363"/>
    </location>
</feature>
<feature type="modified residue" description="Phosphoserine" evidence="18 19 20 21 22 23">
    <location>
        <position position="365"/>
    </location>
</feature>
<feature type="glycosylation site" description="N-linked (GlcNAc...) asparagine" evidence="2">
    <location>
        <position position="56"/>
    </location>
</feature>
<feature type="splice variant" id="VSP_056213" description="In isoform 2." evidence="12">
    <location>
        <begin position="1"/>
        <end position="31"/>
    </location>
</feature>
<sequence>MAIRKKSTKSPPVLSHEFVLQNHADIVSCVAMVFLLGLMFEITAKASIIFVTLQYNVTLPATEEQATESVSLYYYGIKDLATVFFYMLVAIIIHAVIQEYMLDKINRRMHFSKTKHSKFNESGQLSAFYLFACVWGTFILISENYISDPTILWRAYPHNLMTFQMKFFYISQLAYWLHAFPELYFQKTKKEDIPRQLVYIGLYLFHIAGAYLLNLNHLGLVLLVLHYFVEFLFHISRLFYFSNEKYQKGFSLWAVLFVLGRLLTLILSVLTVGFGLARAENQKLDFSTGNFNVLAVRIAVLASICVTQAFMMWKFINFQLRRWREHSAFQAPAVKKKPTVTKGRSSKKGTENGVNGTLTSNVADSPRNKKEKSS</sequence>
<keyword id="KW-0025">Alternative splicing</keyword>
<keyword id="KW-0256">Endoplasmic reticulum</keyword>
<keyword id="KW-0325">Glycoprotein</keyword>
<keyword id="KW-0945">Host-virus interaction</keyword>
<keyword id="KW-0472">Membrane</keyword>
<keyword id="KW-0597">Phosphoprotein</keyword>
<keyword id="KW-0653">Protein transport</keyword>
<keyword id="KW-1267">Proteomics identification</keyword>
<keyword id="KW-1185">Reference proteome</keyword>
<keyword id="KW-0811">Translocation</keyword>
<keyword id="KW-0812">Transmembrane</keyword>
<keyword id="KW-1133">Transmembrane helix</keyword>
<keyword id="KW-0813">Transport</keyword>
<keyword id="KW-0834">Unfolded protein response</keyword>
<name>TRAM1_HUMAN</name>
<accession>Q15629</accession>
<accession>B4E0K2</accession>
<gene>
    <name evidence="17" type="primary">TRAM1</name>
    <name evidence="15" type="synonym">TRAM</name>
</gene>
<comment type="function">
    <text evidence="5 6 8 9 10 11 14">Involved in the translocation of nascent protein chains into or through the endoplasmic reticulum (ER) membrane by facilitating the proper chain positioning at the SEC61 channel (PubMed:12475939, PubMed:1315422, PubMed:32013668, PubMed:8616892, PubMed:9506517). Regulates the exposure of nascent secretory protein chain to the cytosol during translocation into the ER (PubMed:9506517). May affect the phospholipid bilayer in the vicinity of the lateral gate of the SEC61 channel, thereby facilitating ER protein transport (PubMed:32013668). Intimately associates with transmembrane (TM) domain of nascent membrane proteins during the entire integration process into the ER membrane (PubMed:8616892). Associates with the second TM domain of G-protein-coupled receptor opsin/OPSD nascent chain in the ER membrane, which may facilitate its integration into the membrane (PubMed:12475939). Under conditions of ER stress, participates in the disposal of misfolded ER membrane proteins during the unfolded protein response (UPR), an integrated stress response (ISR) pathway, by selectively retrotranslocating misfolded ER-membrane proteins from the ER into the cytosol where they are ubiquitinated and degraded by the proteasome (PubMed:20430023).</text>
</comment>
<comment type="function">
    <text evidence="7">(Microbial infection) In case of cytomegalovirus infection, participates in US2- and US11-mediated ER-to-cytosol retrotranslocation and subsequent degradation of major histocompatibility complex (MHC) class I heavy chains, thereby decreasing the immune detection by cytotoxic T-cells.</text>
</comment>
<comment type="subunit">
    <text evidence="7">Interacts with SEC61B (PubMed:19121997). May interact with Derlin-1/DERL1 (PubMed:19121997).</text>
</comment>
<comment type="subunit">
    <text evidence="7">(Microbial infection) Interacts with human cytomegalovirus/HHV-5 proteins US2 and US11.</text>
</comment>
<comment type="interaction">
    <interactant intactId="EBI-1788852">
        <id>Q15629</id>
    </interactant>
    <interactant intactId="EBI-77683">
        <id>P51572</id>
        <label>BCAP31</label>
    </interactant>
    <organismsDiffer>false</organismsDiffer>
    <experiments>5</experiments>
</comment>
<comment type="interaction">
    <interactant intactId="EBI-1788852">
        <id>Q15629</id>
    </interactant>
    <interactant intactId="EBI-12244272">
        <id>Q02747</id>
        <label>GUCA2A</label>
    </interactant>
    <organismsDiffer>false</organismsDiffer>
    <experiments>3</experiments>
</comment>
<comment type="subcellular location">
    <subcellularLocation>
        <location evidence="5 6 8 10 11">Endoplasmic reticulum membrane</location>
        <topology evidence="2">Multi-pass membrane protein</topology>
    </subcellularLocation>
</comment>
<comment type="alternative products">
    <event type="alternative splicing"/>
    <isoform>
        <id>Q15629-1</id>
        <name>1</name>
        <sequence type="displayed"/>
    </isoform>
    <isoform>
        <id>Q15629-2</id>
        <name>2</name>
        <sequence type="described" ref="VSP_056213"/>
    </isoform>
</comment>
<comment type="induction">
    <text evidence="8">Up-regulated upon endoplasmic reticulum stress.</text>
</comment>
<comment type="PTM">
    <text evidence="6 7">N-glycosylated.</text>
</comment>
<comment type="similarity">
    <text evidence="16">Belongs to the TRAM family.</text>
</comment>